<organism>
    <name type="scientific">Salmonella enteritidis PT4 (strain P125109)</name>
    <dbReference type="NCBI Taxonomy" id="550537"/>
    <lineage>
        <taxon>Bacteria</taxon>
        <taxon>Pseudomonadati</taxon>
        <taxon>Pseudomonadota</taxon>
        <taxon>Gammaproteobacteria</taxon>
        <taxon>Enterobacterales</taxon>
        <taxon>Enterobacteriaceae</taxon>
        <taxon>Salmonella</taxon>
    </lineage>
</organism>
<comment type="function">
    <text evidence="1">Involved in unsaturated fatty acids biosynthesis. Catalyzes the dehydration of short chain beta-hydroxyacyl-ACPs and long chain saturated and unsaturated beta-hydroxyacyl-ACPs.</text>
</comment>
<comment type="catalytic activity">
    <reaction evidence="1">
        <text>a (3R)-hydroxyacyl-[ACP] = a (2E)-enoyl-[ACP] + H2O</text>
        <dbReference type="Rhea" id="RHEA:13097"/>
        <dbReference type="Rhea" id="RHEA-COMP:9925"/>
        <dbReference type="Rhea" id="RHEA-COMP:9945"/>
        <dbReference type="ChEBI" id="CHEBI:15377"/>
        <dbReference type="ChEBI" id="CHEBI:78784"/>
        <dbReference type="ChEBI" id="CHEBI:78827"/>
        <dbReference type="EC" id="4.2.1.59"/>
    </reaction>
</comment>
<comment type="subcellular location">
    <subcellularLocation>
        <location evidence="1">Cytoplasm</location>
    </subcellularLocation>
</comment>
<comment type="similarity">
    <text evidence="1">Belongs to the thioester dehydratase family. FabZ subfamily.</text>
</comment>
<proteinExistence type="inferred from homology"/>
<sequence>MTTNTHTLQIEEILELLPHRFPFLLVDRVLDFEEGRFLRAVKNVSVNEPFFQGHFPGKPILPGVLILEAMAQATGILAFKSVGKLEPGELYYFAGIDEARFKRPVVPGDQMIMEVTFEKTRRGLTRFKGVALVDGKVVCEATMMCARSREA</sequence>
<gene>
    <name evidence="1" type="primary">fabZ</name>
    <name type="ordered locus">SEN0234</name>
</gene>
<feature type="chain" id="PRO_1000123660" description="3-hydroxyacyl-[acyl-carrier-protein] dehydratase FabZ">
    <location>
        <begin position="1"/>
        <end position="151"/>
    </location>
</feature>
<feature type="active site" evidence="1">
    <location>
        <position position="54"/>
    </location>
</feature>
<reference key="1">
    <citation type="journal article" date="2008" name="Genome Res.">
        <title>Comparative genome analysis of Salmonella enteritidis PT4 and Salmonella gallinarum 287/91 provides insights into evolutionary and host adaptation pathways.</title>
        <authorList>
            <person name="Thomson N.R."/>
            <person name="Clayton D.J."/>
            <person name="Windhorst D."/>
            <person name="Vernikos G."/>
            <person name="Davidson S."/>
            <person name="Churcher C."/>
            <person name="Quail M.A."/>
            <person name="Stevens M."/>
            <person name="Jones M.A."/>
            <person name="Watson M."/>
            <person name="Barron A."/>
            <person name="Layton A."/>
            <person name="Pickard D."/>
            <person name="Kingsley R.A."/>
            <person name="Bignell A."/>
            <person name="Clark L."/>
            <person name="Harris B."/>
            <person name="Ormond D."/>
            <person name="Abdellah Z."/>
            <person name="Brooks K."/>
            <person name="Cherevach I."/>
            <person name="Chillingworth T."/>
            <person name="Woodward J."/>
            <person name="Norberczak H."/>
            <person name="Lord A."/>
            <person name="Arrowsmith C."/>
            <person name="Jagels K."/>
            <person name="Moule S."/>
            <person name="Mungall K."/>
            <person name="Saunders M."/>
            <person name="Whitehead S."/>
            <person name="Chabalgoity J.A."/>
            <person name="Maskell D."/>
            <person name="Humphreys T."/>
            <person name="Roberts M."/>
            <person name="Barrow P.A."/>
            <person name="Dougan G."/>
            <person name="Parkhill J."/>
        </authorList>
    </citation>
    <scope>NUCLEOTIDE SEQUENCE [LARGE SCALE GENOMIC DNA]</scope>
    <source>
        <strain>P125109</strain>
    </source>
</reference>
<keyword id="KW-0963">Cytoplasm</keyword>
<keyword id="KW-0441">Lipid A biosynthesis</keyword>
<keyword id="KW-0444">Lipid biosynthesis</keyword>
<keyword id="KW-0443">Lipid metabolism</keyword>
<keyword id="KW-0456">Lyase</keyword>
<protein>
    <recommendedName>
        <fullName evidence="1">3-hydroxyacyl-[acyl-carrier-protein] dehydratase FabZ</fullName>
        <ecNumber evidence="1">4.2.1.59</ecNumber>
    </recommendedName>
    <alternativeName>
        <fullName evidence="1">(3R)-hydroxymyristoyl-[acyl-carrier-protein] dehydratase</fullName>
        <shortName evidence="1">(3R)-hydroxymyristoyl-ACP dehydrase</shortName>
    </alternativeName>
    <alternativeName>
        <fullName evidence="1">Beta-hydroxyacyl-ACP dehydratase</fullName>
    </alternativeName>
</protein>
<dbReference type="EC" id="4.2.1.59" evidence="1"/>
<dbReference type="EMBL" id="AM933172">
    <property type="protein sequence ID" value="CAR31822.1"/>
    <property type="molecule type" value="Genomic_DNA"/>
</dbReference>
<dbReference type="RefSeq" id="WP_000210741.1">
    <property type="nucleotide sequence ID" value="NC_011294.1"/>
</dbReference>
<dbReference type="SMR" id="B5R419"/>
<dbReference type="GeneID" id="66754751"/>
<dbReference type="KEGG" id="set:SEN0234"/>
<dbReference type="HOGENOM" id="CLU_078912_1_0_6"/>
<dbReference type="Proteomes" id="UP000000613">
    <property type="component" value="Chromosome"/>
</dbReference>
<dbReference type="GO" id="GO:0005737">
    <property type="term" value="C:cytoplasm"/>
    <property type="evidence" value="ECO:0007669"/>
    <property type="project" value="UniProtKB-SubCell"/>
</dbReference>
<dbReference type="GO" id="GO:0016020">
    <property type="term" value="C:membrane"/>
    <property type="evidence" value="ECO:0007669"/>
    <property type="project" value="GOC"/>
</dbReference>
<dbReference type="GO" id="GO:0019171">
    <property type="term" value="F:(3R)-hydroxyacyl-[acyl-carrier-protein] dehydratase activity"/>
    <property type="evidence" value="ECO:0007669"/>
    <property type="project" value="UniProtKB-EC"/>
</dbReference>
<dbReference type="GO" id="GO:0006633">
    <property type="term" value="P:fatty acid biosynthetic process"/>
    <property type="evidence" value="ECO:0007669"/>
    <property type="project" value="UniProtKB-UniRule"/>
</dbReference>
<dbReference type="GO" id="GO:0009245">
    <property type="term" value="P:lipid A biosynthetic process"/>
    <property type="evidence" value="ECO:0007669"/>
    <property type="project" value="UniProtKB-UniRule"/>
</dbReference>
<dbReference type="CDD" id="cd01288">
    <property type="entry name" value="FabZ"/>
    <property type="match status" value="1"/>
</dbReference>
<dbReference type="FunFam" id="3.10.129.10:FF:000001">
    <property type="entry name" value="3-hydroxyacyl-[acyl-carrier-protein] dehydratase FabZ"/>
    <property type="match status" value="1"/>
</dbReference>
<dbReference type="Gene3D" id="3.10.129.10">
    <property type="entry name" value="Hotdog Thioesterase"/>
    <property type="match status" value="1"/>
</dbReference>
<dbReference type="HAMAP" id="MF_00406">
    <property type="entry name" value="FabZ"/>
    <property type="match status" value="1"/>
</dbReference>
<dbReference type="InterPro" id="IPR013114">
    <property type="entry name" value="FabA_FabZ"/>
</dbReference>
<dbReference type="InterPro" id="IPR010084">
    <property type="entry name" value="FabZ"/>
</dbReference>
<dbReference type="InterPro" id="IPR029069">
    <property type="entry name" value="HotDog_dom_sf"/>
</dbReference>
<dbReference type="NCBIfam" id="TIGR01750">
    <property type="entry name" value="fabZ"/>
    <property type="match status" value="1"/>
</dbReference>
<dbReference type="NCBIfam" id="NF000582">
    <property type="entry name" value="PRK00006.1"/>
    <property type="match status" value="1"/>
</dbReference>
<dbReference type="PANTHER" id="PTHR30272">
    <property type="entry name" value="3-HYDROXYACYL-[ACYL-CARRIER-PROTEIN] DEHYDRATASE"/>
    <property type="match status" value="1"/>
</dbReference>
<dbReference type="PANTHER" id="PTHR30272:SF1">
    <property type="entry name" value="3-HYDROXYACYL-[ACYL-CARRIER-PROTEIN] DEHYDRATASE"/>
    <property type="match status" value="1"/>
</dbReference>
<dbReference type="Pfam" id="PF07977">
    <property type="entry name" value="FabA"/>
    <property type="match status" value="1"/>
</dbReference>
<dbReference type="SUPFAM" id="SSF54637">
    <property type="entry name" value="Thioesterase/thiol ester dehydrase-isomerase"/>
    <property type="match status" value="1"/>
</dbReference>
<evidence type="ECO:0000255" key="1">
    <source>
        <dbReference type="HAMAP-Rule" id="MF_00406"/>
    </source>
</evidence>
<name>FABZ_SALEP</name>
<accession>B5R419</accession>